<name>RL10_BORT9</name>
<evidence type="ECO:0000255" key="1">
    <source>
        <dbReference type="HAMAP-Rule" id="MF_00362"/>
    </source>
</evidence>
<evidence type="ECO:0000305" key="2"/>
<gene>
    <name evidence="1" type="primary">rplJ</name>
    <name type="ordered locus">BT0391</name>
</gene>
<feature type="chain" id="PRO_1000195530" description="Large ribosomal subunit protein uL10">
    <location>
        <begin position="1"/>
        <end position="165"/>
    </location>
</feature>
<protein>
    <recommendedName>
        <fullName evidence="1">Large ribosomal subunit protein uL10</fullName>
    </recommendedName>
    <alternativeName>
        <fullName evidence="2">50S ribosomal protein L10</fullName>
    </alternativeName>
</protein>
<organism>
    <name type="scientific">Borrelia turicatae (strain 91E135)</name>
    <dbReference type="NCBI Taxonomy" id="314724"/>
    <lineage>
        <taxon>Bacteria</taxon>
        <taxon>Pseudomonadati</taxon>
        <taxon>Spirochaetota</taxon>
        <taxon>Spirochaetia</taxon>
        <taxon>Spirochaetales</taxon>
        <taxon>Borreliaceae</taxon>
        <taxon>Borrelia</taxon>
    </lineage>
</organism>
<sequence>MHAKINPKKVEMFNLLKEFLDGKDSVFFLDYRGLTVATLTELRNRVENEKGELKVVKNNIMKRVLKDKHMEGLDSYLLGPTAVVTAVDEANVIAKIFYEFVKTSSLKVKGGFVLGEVYDEAKLNAYSKLPTKKESISLFMNVLKAPISKLARTLKALSDVKDVKV</sequence>
<comment type="function">
    <text evidence="1">Forms part of the ribosomal stalk, playing a central role in the interaction of the ribosome with GTP-bound translation factors.</text>
</comment>
<comment type="subunit">
    <text evidence="1">Part of the ribosomal stalk of the 50S ribosomal subunit. The N-terminus interacts with L11 and the large rRNA to form the base of the stalk. The C-terminus forms an elongated spine to which L12 dimers bind in a sequential fashion forming a multimeric L10(L12)X complex.</text>
</comment>
<comment type="similarity">
    <text evidence="1">Belongs to the universal ribosomal protein uL10 family.</text>
</comment>
<keyword id="KW-1185">Reference proteome</keyword>
<keyword id="KW-0687">Ribonucleoprotein</keyword>
<keyword id="KW-0689">Ribosomal protein</keyword>
<keyword id="KW-0694">RNA-binding</keyword>
<keyword id="KW-0699">rRNA-binding</keyword>
<accession>A1QZH9</accession>
<dbReference type="EMBL" id="CP000049">
    <property type="protein sequence ID" value="AAX17721.1"/>
    <property type="molecule type" value="Genomic_DNA"/>
</dbReference>
<dbReference type="RefSeq" id="WP_011772340.1">
    <property type="nucleotide sequence ID" value="NC_008710.1"/>
</dbReference>
<dbReference type="SMR" id="A1QZH9"/>
<dbReference type="KEGG" id="btu:BT0391"/>
<dbReference type="eggNOG" id="COG0244">
    <property type="taxonomic scope" value="Bacteria"/>
</dbReference>
<dbReference type="HOGENOM" id="CLU_092227_1_2_12"/>
<dbReference type="Proteomes" id="UP000001205">
    <property type="component" value="Chromosome"/>
</dbReference>
<dbReference type="GO" id="GO:1990904">
    <property type="term" value="C:ribonucleoprotein complex"/>
    <property type="evidence" value="ECO:0007669"/>
    <property type="project" value="UniProtKB-KW"/>
</dbReference>
<dbReference type="GO" id="GO:0005840">
    <property type="term" value="C:ribosome"/>
    <property type="evidence" value="ECO:0007669"/>
    <property type="project" value="UniProtKB-KW"/>
</dbReference>
<dbReference type="GO" id="GO:0070180">
    <property type="term" value="F:large ribosomal subunit rRNA binding"/>
    <property type="evidence" value="ECO:0007669"/>
    <property type="project" value="UniProtKB-UniRule"/>
</dbReference>
<dbReference type="GO" id="GO:0006412">
    <property type="term" value="P:translation"/>
    <property type="evidence" value="ECO:0007669"/>
    <property type="project" value="UniProtKB-UniRule"/>
</dbReference>
<dbReference type="CDD" id="cd05797">
    <property type="entry name" value="Ribosomal_L10"/>
    <property type="match status" value="1"/>
</dbReference>
<dbReference type="Gene3D" id="3.30.70.1730">
    <property type="match status" value="1"/>
</dbReference>
<dbReference type="Gene3D" id="6.10.250.2350">
    <property type="match status" value="1"/>
</dbReference>
<dbReference type="HAMAP" id="MF_00362">
    <property type="entry name" value="Ribosomal_uL10"/>
    <property type="match status" value="1"/>
</dbReference>
<dbReference type="InterPro" id="IPR001790">
    <property type="entry name" value="Ribosomal_uL10"/>
</dbReference>
<dbReference type="InterPro" id="IPR043141">
    <property type="entry name" value="Ribosomal_uL10-like_sf"/>
</dbReference>
<dbReference type="InterPro" id="IPR022973">
    <property type="entry name" value="Ribosomal_uL10_bac"/>
</dbReference>
<dbReference type="InterPro" id="IPR047865">
    <property type="entry name" value="Ribosomal_uL10_bac_type"/>
</dbReference>
<dbReference type="NCBIfam" id="NF000955">
    <property type="entry name" value="PRK00099.1-1"/>
    <property type="match status" value="1"/>
</dbReference>
<dbReference type="PANTHER" id="PTHR11560">
    <property type="entry name" value="39S RIBOSOMAL PROTEIN L10, MITOCHONDRIAL"/>
    <property type="match status" value="1"/>
</dbReference>
<dbReference type="Pfam" id="PF00466">
    <property type="entry name" value="Ribosomal_L10"/>
    <property type="match status" value="1"/>
</dbReference>
<dbReference type="SUPFAM" id="SSF160369">
    <property type="entry name" value="Ribosomal protein L10-like"/>
    <property type="match status" value="1"/>
</dbReference>
<proteinExistence type="inferred from homology"/>
<reference key="1">
    <citation type="submission" date="2004-12" db="EMBL/GenBank/DDBJ databases">
        <title>The genome sequence of Borrelia hermsii and Borrelia turicatae: comparative analysis of two agents of endemic N. America relapsing fever.</title>
        <authorList>
            <person name="Porcella S.F."/>
            <person name="Raffel S.J."/>
            <person name="Schrumpf M.E."/>
            <person name="Montgomery B."/>
            <person name="Smith T."/>
            <person name="Schwan T.G."/>
        </authorList>
    </citation>
    <scope>NUCLEOTIDE SEQUENCE [LARGE SCALE GENOMIC DNA]</scope>
    <source>
        <strain>91E135</strain>
    </source>
</reference>